<feature type="chain" id="PRO_0000249988" description="Anhydro-N-acetylmuramic acid kinase">
    <location>
        <begin position="1"/>
        <end position="382"/>
    </location>
</feature>
<feature type="binding site" evidence="1">
    <location>
        <begin position="22"/>
        <end position="29"/>
    </location>
    <ligand>
        <name>ATP</name>
        <dbReference type="ChEBI" id="CHEBI:30616"/>
    </ligand>
</feature>
<comment type="function">
    <text evidence="1">Catalyzes the specific phosphorylation of 1,6-anhydro-N-acetylmuramic acid (anhMurNAc) with the simultaneous cleavage of the 1,6-anhydro ring, generating MurNAc-6-P. Is required for the utilization of anhMurNAc either imported from the medium or derived from its own cell wall murein, and thus plays a role in cell wall recycling.</text>
</comment>
<comment type="catalytic activity">
    <reaction evidence="1">
        <text>1,6-anhydro-N-acetyl-beta-muramate + ATP + H2O = N-acetyl-D-muramate 6-phosphate + ADP + H(+)</text>
        <dbReference type="Rhea" id="RHEA:24952"/>
        <dbReference type="ChEBI" id="CHEBI:15377"/>
        <dbReference type="ChEBI" id="CHEBI:15378"/>
        <dbReference type="ChEBI" id="CHEBI:30616"/>
        <dbReference type="ChEBI" id="CHEBI:58690"/>
        <dbReference type="ChEBI" id="CHEBI:58722"/>
        <dbReference type="ChEBI" id="CHEBI:456216"/>
        <dbReference type="EC" id="2.7.1.170"/>
    </reaction>
</comment>
<comment type="pathway">
    <text evidence="1">Amino-sugar metabolism; 1,6-anhydro-N-acetylmuramate degradation.</text>
</comment>
<comment type="pathway">
    <text evidence="1">Cell wall biogenesis; peptidoglycan recycling.</text>
</comment>
<comment type="similarity">
    <text evidence="1">Belongs to the anhydro-N-acetylmuramic acid kinase family.</text>
</comment>
<comment type="sequence caution" evidence="2">
    <conflict type="erroneous initiation">
        <sequence resource="EMBL-CDS" id="ABB07369"/>
    </conflict>
</comment>
<reference key="1">
    <citation type="submission" date="2005-10" db="EMBL/GenBank/DDBJ databases">
        <title>Complete sequence of chromosome 1 of Burkholderia sp. 383.</title>
        <authorList>
            <consortium name="US DOE Joint Genome Institute"/>
            <person name="Copeland A."/>
            <person name="Lucas S."/>
            <person name="Lapidus A."/>
            <person name="Barry K."/>
            <person name="Detter J.C."/>
            <person name="Glavina T."/>
            <person name="Hammon N."/>
            <person name="Israni S."/>
            <person name="Pitluck S."/>
            <person name="Chain P."/>
            <person name="Malfatti S."/>
            <person name="Shin M."/>
            <person name="Vergez L."/>
            <person name="Schmutz J."/>
            <person name="Larimer F."/>
            <person name="Land M."/>
            <person name="Kyrpides N."/>
            <person name="Lykidis A."/>
            <person name="Richardson P."/>
        </authorList>
    </citation>
    <scope>NUCLEOTIDE SEQUENCE [LARGE SCALE GENOMIC DNA]</scope>
    <source>
        <strain>ATCC 17760 / DSM 23089 / LMG 22485 / NCIMB 9086 / R18194 / 383</strain>
    </source>
</reference>
<protein>
    <recommendedName>
        <fullName evidence="1">Anhydro-N-acetylmuramic acid kinase</fullName>
        <ecNumber evidence="1">2.7.1.170</ecNumber>
    </recommendedName>
    <alternativeName>
        <fullName evidence="1">AnhMurNAc kinase</fullName>
    </alternativeName>
</protein>
<proteinExistence type="inferred from homology"/>
<gene>
    <name evidence="1" type="primary">anmK</name>
    <name type="ordered locus">Bcep18194_A3768</name>
</gene>
<organism>
    <name type="scientific">Burkholderia lata (strain ATCC 17760 / DSM 23089 / LMG 22485 / NCIMB 9086 / R18194 / 383)</name>
    <dbReference type="NCBI Taxonomy" id="482957"/>
    <lineage>
        <taxon>Bacteria</taxon>
        <taxon>Pseudomonadati</taxon>
        <taxon>Pseudomonadota</taxon>
        <taxon>Betaproteobacteria</taxon>
        <taxon>Burkholderiales</taxon>
        <taxon>Burkholderiaceae</taxon>
        <taxon>Burkholderia</taxon>
        <taxon>Burkholderia cepacia complex</taxon>
    </lineage>
</organism>
<accession>Q39JJ7</accession>
<dbReference type="EC" id="2.7.1.170" evidence="1"/>
<dbReference type="EMBL" id="CP000151">
    <property type="protein sequence ID" value="ABB07369.1"/>
    <property type="status" value="ALT_INIT"/>
    <property type="molecule type" value="Genomic_DNA"/>
</dbReference>
<dbReference type="RefSeq" id="WP_041492740.1">
    <property type="nucleotide sequence ID" value="NC_007510.1"/>
</dbReference>
<dbReference type="SMR" id="Q39JJ7"/>
<dbReference type="GeneID" id="45093681"/>
<dbReference type="KEGG" id="bur:Bcep18194_A3768"/>
<dbReference type="PATRIC" id="fig|482957.22.peg.628"/>
<dbReference type="HOGENOM" id="CLU_038782_0_0_4"/>
<dbReference type="UniPathway" id="UPA00343"/>
<dbReference type="UniPathway" id="UPA00544"/>
<dbReference type="Proteomes" id="UP000002705">
    <property type="component" value="Chromosome 1"/>
</dbReference>
<dbReference type="GO" id="GO:0005524">
    <property type="term" value="F:ATP binding"/>
    <property type="evidence" value="ECO:0007669"/>
    <property type="project" value="UniProtKB-UniRule"/>
</dbReference>
<dbReference type="GO" id="GO:0016301">
    <property type="term" value="F:kinase activity"/>
    <property type="evidence" value="ECO:0007669"/>
    <property type="project" value="UniProtKB-KW"/>
</dbReference>
<dbReference type="GO" id="GO:0016773">
    <property type="term" value="F:phosphotransferase activity, alcohol group as acceptor"/>
    <property type="evidence" value="ECO:0007669"/>
    <property type="project" value="UniProtKB-UniRule"/>
</dbReference>
<dbReference type="GO" id="GO:0097175">
    <property type="term" value="P:1,6-anhydro-N-acetyl-beta-muramic acid catabolic process"/>
    <property type="evidence" value="ECO:0007669"/>
    <property type="project" value="UniProtKB-UniRule"/>
</dbReference>
<dbReference type="GO" id="GO:0006040">
    <property type="term" value="P:amino sugar metabolic process"/>
    <property type="evidence" value="ECO:0007669"/>
    <property type="project" value="InterPro"/>
</dbReference>
<dbReference type="GO" id="GO:0009254">
    <property type="term" value="P:peptidoglycan turnover"/>
    <property type="evidence" value="ECO:0007669"/>
    <property type="project" value="UniProtKB-UniRule"/>
</dbReference>
<dbReference type="CDD" id="cd24050">
    <property type="entry name" value="ASKHA_NBD_ANMK"/>
    <property type="match status" value="1"/>
</dbReference>
<dbReference type="Gene3D" id="3.30.420.40">
    <property type="match status" value="2"/>
</dbReference>
<dbReference type="HAMAP" id="MF_01270">
    <property type="entry name" value="AnhMurNAc_kinase"/>
    <property type="match status" value="1"/>
</dbReference>
<dbReference type="InterPro" id="IPR005338">
    <property type="entry name" value="Anhydro_N_Ac-Mur_kinase"/>
</dbReference>
<dbReference type="InterPro" id="IPR043129">
    <property type="entry name" value="ATPase_NBD"/>
</dbReference>
<dbReference type="NCBIfam" id="NF007139">
    <property type="entry name" value="PRK09585.1-3"/>
    <property type="match status" value="1"/>
</dbReference>
<dbReference type="NCBIfam" id="NF007140">
    <property type="entry name" value="PRK09585.1-4"/>
    <property type="match status" value="1"/>
</dbReference>
<dbReference type="PANTHER" id="PTHR30605">
    <property type="entry name" value="ANHYDRO-N-ACETYLMURAMIC ACID KINASE"/>
    <property type="match status" value="1"/>
</dbReference>
<dbReference type="PANTHER" id="PTHR30605:SF0">
    <property type="entry name" value="ANHYDRO-N-ACETYLMURAMIC ACID KINASE"/>
    <property type="match status" value="1"/>
</dbReference>
<dbReference type="Pfam" id="PF03702">
    <property type="entry name" value="AnmK"/>
    <property type="match status" value="1"/>
</dbReference>
<dbReference type="SUPFAM" id="SSF53067">
    <property type="entry name" value="Actin-like ATPase domain"/>
    <property type="match status" value="1"/>
</dbReference>
<keyword id="KW-0067">ATP-binding</keyword>
<keyword id="KW-0119">Carbohydrate metabolism</keyword>
<keyword id="KW-0418">Kinase</keyword>
<keyword id="KW-0547">Nucleotide-binding</keyword>
<keyword id="KW-0808">Transferase</keyword>
<sequence>MPQRQPQNAHPADGIYFGLMSGTSMDGVDGVAVRFEAGKAPVVLAEAFVGFAQSLRDALFALQQPGDDEIDRESLAANALVTRYAVCCHELQRTAGLSRDEIRAIGVHGQTVRHRPERGYTRQINNPALLAELTQVDVIADFRSRDVAAGGHGAPLAPAFHATVFGAPGETRVVCNLGGISNITILPGEGGDVRGFDCGPANALLDEWATRHLGKPYDDGGKFAARGTVHAPLLDALLDEPYFAAPPPKSTGRDLFNPAWLDAKLAAFAQVAPEDVQATLTALTAVSVAREIAQHAAGCKAVFVCGGGARNPVLLDALRHALREAGVPATVDTTATLGVPPQQVEALAFAWLAYRFTARQPGNLATVTGAAGNRVLGALYPR</sequence>
<evidence type="ECO:0000255" key="1">
    <source>
        <dbReference type="HAMAP-Rule" id="MF_01270"/>
    </source>
</evidence>
<evidence type="ECO:0000305" key="2"/>
<name>ANMK_BURL3</name>